<dbReference type="EC" id="6.1.1.4" evidence="1"/>
<dbReference type="EMBL" id="BA000022">
    <property type="protein sequence ID" value="BAA17302.1"/>
    <property type="molecule type" value="Genomic_DNA"/>
</dbReference>
<dbReference type="PIR" id="S77455">
    <property type="entry name" value="S77455"/>
</dbReference>
<dbReference type="SMR" id="P73274"/>
<dbReference type="FunCoup" id="P73274">
    <property type="interactions" value="538"/>
</dbReference>
<dbReference type="STRING" id="1148.gene:10498165"/>
<dbReference type="PaxDb" id="1148-1652380"/>
<dbReference type="EnsemblBacteria" id="BAA17302">
    <property type="protein sequence ID" value="BAA17302"/>
    <property type="gene ID" value="BAA17302"/>
</dbReference>
<dbReference type="KEGG" id="syn:sll1074"/>
<dbReference type="eggNOG" id="COG0495">
    <property type="taxonomic scope" value="Bacteria"/>
</dbReference>
<dbReference type="InParanoid" id="P73274"/>
<dbReference type="PhylomeDB" id="P73274"/>
<dbReference type="Proteomes" id="UP000001425">
    <property type="component" value="Chromosome"/>
</dbReference>
<dbReference type="GO" id="GO:0005829">
    <property type="term" value="C:cytosol"/>
    <property type="evidence" value="ECO:0000318"/>
    <property type="project" value="GO_Central"/>
</dbReference>
<dbReference type="GO" id="GO:0002161">
    <property type="term" value="F:aminoacyl-tRNA deacylase activity"/>
    <property type="evidence" value="ECO:0007669"/>
    <property type="project" value="InterPro"/>
</dbReference>
<dbReference type="GO" id="GO:0005524">
    <property type="term" value="F:ATP binding"/>
    <property type="evidence" value="ECO:0007669"/>
    <property type="project" value="UniProtKB-UniRule"/>
</dbReference>
<dbReference type="GO" id="GO:0004823">
    <property type="term" value="F:leucine-tRNA ligase activity"/>
    <property type="evidence" value="ECO:0000318"/>
    <property type="project" value="GO_Central"/>
</dbReference>
<dbReference type="GO" id="GO:0006429">
    <property type="term" value="P:leucyl-tRNA aminoacylation"/>
    <property type="evidence" value="ECO:0000318"/>
    <property type="project" value="GO_Central"/>
</dbReference>
<dbReference type="CDD" id="cd07958">
    <property type="entry name" value="Anticodon_Ia_Leu_BEm"/>
    <property type="match status" value="1"/>
</dbReference>
<dbReference type="CDD" id="cd00812">
    <property type="entry name" value="LeuRS_core"/>
    <property type="match status" value="1"/>
</dbReference>
<dbReference type="FunFam" id="3.10.20.590:FF:000001">
    <property type="entry name" value="Leucine--tRNA ligase"/>
    <property type="match status" value="1"/>
</dbReference>
<dbReference type="FunFam" id="3.40.50.620:FF:000003">
    <property type="entry name" value="Leucine--tRNA ligase"/>
    <property type="match status" value="1"/>
</dbReference>
<dbReference type="FunFam" id="3.40.50.620:FF:000212">
    <property type="entry name" value="Leucine--tRNA ligase"/>
    <property type="match status" value="1"/>
</dbReference>
<dbReference type="FunFam" id="1.10.730.10:FF:000011">
    <property type="entry name" value="Leucine--tRNA ligase chloroplastic/mitochondrial"/>
    <property type="match status" value="1"/>
</dbReference>
<dbReference type="Gene3D" id="3.40.50.620">
    <property type="entry name" value="HUPs"/>
    <property type="match status" value="2"/>
</dbReference>
<dbReference type="Gene3D" id="1.10.730.10">
    <property type="entry name" value="Isoleucyl-tRNA Synthetase, Domain 1"/>
    <property type="match status" value="1"/>
</dbReference>
<dbReference type="HAMAP" id="MF_00049_B">
    <property type="entry name" value="Leu_tRNA_synth_B"/>
    <property type="match status" value="1"/>
</dbReference>
<dbReference type="InterPro" id="IPR001412">
    <property type="entry name" value="aa-tRNA-synth_I_CS"/>
</dbReference>
<dbReference type="InterPro" id="IPR002300">
    <property type="entry name" value="aa-tRNA-synth_Ia"/>
</dbReference>
<dbReference type="InterPro" id="IPR002302">
    <property type="entry name" value="Leu-tRNA-ligase"/>
</dbReference>
<dbReference type="InterPro" id="IPR025709">
    <property type="entry name" value="Leu_tRNA-synth_edit"/>
</dbReference>
<dbReference type="InterPro" id="IPR013155">
    <property type="entry name" value="M/V/L/I-tRNA-synth_anticd-bd"/>
</dbReference>
<dbReference type="InterPro" id="IPR015413">
    <property type="entry name" value="Methionyl/Leucyl_tRNA_Synth"/>
</dbReference>
<dbReference type="InterPro" id="IPR014729">
    <property type="entry name" value="Rossmann-like_a/b/a_fold"/>
</dbReference>
<dbReference type="InterPro" id="IPR009080">
    <property type="entry name" value="tRNAsynth_Ia_anticodon-bd"/>
</dbReference>
<dbReference type="InterPro" id="IPR009008">
    <property type="entry name" value="Val/Leu/Ile-tRNA-synth_edit"/>
</dbReference>
<dbReference type="NCBIfam" id="TIGR00396">
    <property type="entry name" value="leuS_bact"/>
    <property type="match status" value="1"/>
</dbReference>
<dbReference type="PANTHER" id="PTHR43740:SF2">
    <property type="entry name" value="LEUCINE--TRNA LIGASE, MITOCHONDRIAL"/>
    <property type="match status" value="1"/>
</dbReference>
<dbReference type="PANTHER" id="PTHR43740">
    <property type="entry name" value="LEUCYL-TRNA SYNTHETASE"/>
    <property type="match status" value="1"/>
</dbReference>
<dbReference type="Pfam" id="PF08264">
    <property type="entry name" value="Anticodon_1"/>
    <property type="match status" value="1"/>
</dbReference>
<dbReference type="Pfam" id="PF00133">
    <property type="entry name" value="tRNA-synt_1"/>
    <property type="match status" value="2"/>
</dbReference>
<dbReference type="Pfam" id="PF13603">
    <property type="entry name" value="tRNA-synt_1_2"/>
    <property type="match status" value="1"/>
</dbReference>
<dbReference type="Pfam" id="PF09334">
    <property type="entry name" value="tRNA-synt_1g"/>
    <property type="match status" value="1"/>
</dbReference>
<dbReference type="PRINTS" id="PR00985">
    <property type="entry name" value="TRNASYNTHLEU"/>
</dbReference>
<dbReference type="SUPFAM" id="SSF47323">
    <property type="entry name" value="Anticodon-binding domain of a subclass of class I aminoacyl-tRNA synthetases"/>
    <property type="match status" value="1"/>
</dbReference>
<dbReference type="SUPFAM" id="SSF52374">
    <property type="entry name" value="Nucleotidylyl transferase"/>
    <property type="match status" value="1"/>
</dbReference>
<dbReference type="SUPFAM" id="SSF50677">
    <property type="entry name" value="ValRS/IleRS/LeuRS editing domain"/>
    <property type="match status" value="1"/>
</dbReference>
<dbReference type="PROSITE" id="PS00178">
    <property type="entry name" value="AA_TRNA_LIGASE_I"/>
    <property type="match status" value="1"/>
</dbReference>
<proteinExistence type="inferred from homology"/>
<name>SYL_SYNY3</name>
<organism>
    <name type="scientific">Synechocystis sp. (strain ATCC 27184 / PCC 6803 / Kazusa)</name>
    <dbReference type="NCBI Taxonomy" id="1111708"/>
    <lineage>
        <taxon>Bacteria</taxon>
        <taxon>Bacillati</taxon>
        <taxon>Cyanobacteriota</taxon>
        <taxon>Cyanophyceae</taxon>
        <taxon>Synechococcales</taxon>
        <taxon>Merismopediaceae</taxon>
        <taxon>Synechocystis</taxon>
    </lineage>
</organism>
<sequence>MASPYNAGEIEQKWQQRWAEWGLDKTPIASDLPKFYALSMFPYPSGNLHMGHVRNYTITDVIARLKRMQGYQVLHPMGWDAFGLPAENAAIERGIPPKQWTEKNIAQMRAQLQQLGLSIDWEREVATCAPDYYRWTQWLFLEFFQAGLAYQKEATVNWDPIDQTVLANEQVDSEGRSWRSGAMVERKLLRQWFLKITDYAEALLNDLEQLTGWPERVKLMQSHWIGKSVGAYLEFPIKDSQEKIAVFTTRPDTVYGVTYVVLAPEHPLTKVVTTAEQQGTVDEFVAMVAKESEIERTAEDKPKRGVKTGGIAINPFNGEEIPILIADYVLYEYGTGAVMGVPAHDQRDFKFAQDNNLPMQVVIIPDDADNSDVNLTVAYTEAGVMVNSAQFTGMASPKAKQAIIKFAEDNDYGRAKVQYRLRDWLISRQRYWGCPIPIIHCDDCGAVPVPTKDLPVELPDNVEFSGRGPSPLAKLEDWINVPCPSCGKPARRETDTMDTFIDSSWYFLRYADAQNTELPFDGEKVAHWLPVDQYVGGIEHAILHLLYSRFFTKVLADRQLIPVKEPFQKLLTQGMVQGITYKNPTTGKYVPAKDLQTGQQVIDPKDPKDPDSGEPLQVFYEKMSKSKFNGVDPQEVLAKYGADTARMFILFKAPPEKDLEWDDADVEGQFRFLNRVWRLVTDYIGDPAGIRFAVRPETLVTNEPLTKAEKDLRRAIHGAIKEVAEDLNDDYQFNTAISEMMKLSNALIAATDLISFPVYQEGIETLLLLLAPFAPHLTEELWHRLGRTDSIHQQAWLQVDPTALVLDEITLVIQVLGKTRGTITVPASADKTQLEELARNSDLAQRYLEGKTIKKVIVVPGKLVNFVIT</sequence>
<evidence type="ECO:0000255" key="1">
    <source>
        <dbReference type="HAMAP-Rule" id="MF_00049"/>
    </source>
</evidence>
<feature type="chain" id="PRO_0000152105" description="Leucine--tRNA ligase">
    <location>
        <begin position="1"/>
        <end position="869"/>
    </location>
</feature>
<feature type="short sequence motif" description="'HIGH' region">
    <location>
        <begin position="42"/>
        <end position="52"/>
    </location>
</feature>
<feature type="short sequence motif" description="'KMSKS' region">
    <location>
        <begin position="622"/>
        <end position="626"/>
    </location>
</feature>
<feature type="binding site" evidence="1">
    <location>
        <position position="625"/>
    </location>
    <ligand>
        <name>ATP</name>
        <dbReference type="ChEBI" id="CHEBI:30616"/>
    </ligand>
</feature>
<reference key="1">
    <citation type="journal article" date="1996" name="DNA Res.">
        <title>Sequence analysis of the genome of the unicellular cyanobacterium Synechocystis sp. strain PCC6803. II. Sequence determination of the entire genome and assignment of potential protein-coding regions.</title>
        <authorList>
            <person name="Kaneko T."/>
            <person name="Sato S."/>
            <person name="Kotani H."/>
            <person name="Tanaka A."/>
            <person name="Asamizu E."/>
            <person name="Nakamura Y."/>
            <person name="Miyajima N."/>
            <person name="Hirosawa M."/>
            <person name="Sugiura M."/>
            <person name="Sasamoto S."/>
            <person name="Kimura T."/>
            <person name="Hosouchi T."/>
            <person name="Matsuno A."/>
            <person name="Muraki A."/>
            <person name="Nakazaki N."/>
            <person name="Naruo K."/>
            <person name="Okumura S."/>
            <person name="Shimpo S."/>
            <person name="Takeuchi C."/>
            <person name="Wada T."/>
            <person name="Watanabe A."/>
            <person name="Yamada M."/>
            <person name="Yasuda M."/>
            <person name="Tabata S."/>
        </authorList>
    </citation>
    <scope>NUCLEOTIDE SEQUENCE [LARGE SCALE GENOMIC DNA]</scope>
    <source>
        <strain>ATCC 27184 / PCC 6803 / Kazusa</strain>
    </source>
</reference>
<accession>P73274</accession>
<protein>
    <recommendedName>
        <fullName evidence="1">Leucine--tRNA ligase</fullName>
        <ecNumber evidence="1">6.1.1.4</ecNumber>
    </recommendedName>
    <alternativeName>
        <fullName evidence="1">Leucyl-tRNA synthetase</fullName>
        <shortName evidence="1">LeuRS</shortName>
    </alternativeName>
</protein>
<comment type="catalytic activity">
    <reaction evidence="1">
        <text>tRNA(Leu) + L-leucine + ATP = L-leucyl-tRNA(Leu) + AMP + diphosphate</text>
        <dbReference type="Rhea" id="RHEA:11688"/>
        <dbReference type="Rhea" id="RHEA-COMP:9613"/>
        <dbReference type="Rhea" id="RHEA-COMP:9622"/>
        <dbReference type="ChEBI" id="CHEBI:30616"/>
        <dbReference type="ChEBI" id="CHEBI:33019"/>
        <dbReference type="ChEBI" id="CHEBI:57427"/>
        <dbReference type="ChEBI" id="CHEBI:78442"/>
        <dbReference type="ChEBI" id="CHEBI:78494"/>
        <dbReference type="ChEBI" id="CHEBI:456215"/>
        <dbReference type="EC" id="6.1.1.4"/>
    </reaction>
</comment>
<comment type="subcellular location">
    <subcellularLocation>
        <location evidence="1">Cytoplasm</location>
    </subcellularLocation>
</comment>
<comment type="similarity">
    <text evidence="1">Belongs to the class-I aminoacyl-tRNA synthetase family.</text>
</comment>
<keyword id="KW-0030">Aminoacyl-tRNA synthetase</keyword>
<keyword id="KW-0067">ATP-binding</keyword>
<keyword id="KW-0963">Cytoplasm</keyword>
<keyword id="KW-0436">Ligase</keyword>
<keyword id="KW-0547">Nucleotide-binding</keyword>
<keyword id="KW-0648">Protein biosynthesis</keyword>
<keyword id="KW-1185">Reference proteome</keyword>
<gene>
    <name evidence="1" type="primary">leuS</name>
    <name type="ordered locus">sll1074</name>
</gene>